<reference key="1">
    <citation type="journal article" date="2005" name="Science">
        <title>Life at depth: Photobacterium profundum genome sequence and expression analysis.</title>
        <authorList>
            <person name="Vezzi A."/>
            <person name="Campanaro S."/>
            <person name="D'Angelo M."/>
            <person name="Simonato F."/>
            <person name="Vitulo N."/>
            <person name="Lauro F.M."/>
            <person name="Cestaro A."/>
            <person name="Malacrida G."/>
            <person name="Simionati B."/>
            <person name="Cannata N."/>
            <person name="Romualdi C."/>
            <person name="Bartlett D.H."/>
            <person name="Valle G."/>
        </authorList>
    </citation>
    <scope>NUCLEOTIDE SEQUENCE [LARGE SCALE GENOMIC DNA]</scope>
    <source>
        <strain>ATCC BAA-1253 / SS9</strain>
    </source>
</reference>
<keyword id="KW-0067">ATP-binding</keyword>
<keyword id="KW-0143">Chaperone</keyword>
<keyword id="KW-0479">Metal-binding</keyword>
<keyword id="KW-0547">Nucleotide-binding</keyword>
<keyword id="KW-1185">Reference proteome</keyword>
<keyword id="KW-0862">Zinc</keyword>
<proteinExistence type="inferred from homology"/>
<accession>Q6LNW1</accession>
<evidence type="ECO:0000255" key="1">
    <source>
        <dbReference type="HAMAP-Rule" id="MF_00175"/>
    </source>
</evidence>
<evidence type="ECO:0000255" key="2">
    <source>
        <dbReference type="PROSITE-ProRule" id="PRU01250"/>
    </source>
</evidence>
<gene>
    <name evidence="1" type="primary">clpX</name>
    <name type="ordered locus">PBPRA2636</name>
</gene>
<comment type="function">
    <text evidence="1">ATP-dependent specificity component of the Clp protease. It directs the protease to specific substrates. Can perform chaperone functions in the absence of ClpP.</text>
</comment>
<comment type="subunit">
    <text evidence="1">Component of the ClpX-ClpP complex. Forms a hexameric ring that, in the presence of ATP, binds to fourteen ClpP subunits assembled into a disk-like structure with a central cavity, resembling the structure of eukaryotic proteasomes.</text>
</comment>
<comment type="similarity">
    <text evidence="1">Belongs to the ClpX chaperone family.</text>
</comment>
<protein>
    <recommendedName>
        <fullName evidence="1">ATP-dependent Clp protease ATP-binding subunit ClpX</fullName>
    </recommendedName>
</protein>
<organism>
    <name type="scientific">Photobacterium profundum (strain SS9)</name>
    <dbReference type="NCBI Taxonomy" id="298386"/>
    <lineage>
        <taxon>Bacteria</taxon>
        <taxon>Pseudomonadati</taxon>
        <taxon>Pseudomonadota</taxon>
        <taxon>Gammaproteobacteria</taxon>
        <taxon>Vibrionales</taxon>
        <taxon>Vibrionaceae</taxon>
        <taxon>Photobacterium</taxon>
    </lineage>
</organism>
<dbReference type="EMBL" id="CR378671">
    <property type="protein sequence ID" value="CAG21015.1"/>
    <property type="molecule type" value="Genomic_DNA"/>
</dbReference>
<dbReference type="RefSeq" id="WP_011219294.1">
    <property type="nucleotide sequence ID" value="NC_006370.1"/>
</dbReference>
<dbReference type="SMR" id="Q6LNW1"/>
<dbReference type="STRING" id="298386.PBPRA2636"/>
<dbReference type="KEGG" id="ppr:PBPRA2636"/>
<dbReference type="eggNOG" id="COG1219">
    <property type="taxonomic scope" value="Bacteria"/>
</dbReference>
<dbReference type="HOGENOM" id="CLU_014218_8_2_6"/>
<dbReference type="Proteomes" id="UP000000593">
    <property type="component" value="Chromosome 1"/>
</dbReference>
<dbReference type="GO" id="GO:0009376">
    <property type="term" value="C:HslUV protease complex"/>
    <property type="evidence" value="ECO:0007669"/>
    <property type="project" value="TreeGrafter"/>
</dbReference>
<dbReference type="GO" id="GO:0005524">
    <property type="term" value="F:ATP binding"/>
    <property type="evidence" value="ECO:0007669"/>
    <property type="project" value="UniProtKB-UniRule"/>
</dbReference>
<dbReference type="GO" id="GO:0016887">
    <property type="term" value="F:ATP hydrolysis activity"/>
    <property type="evidence" value="ECO:0007669"/>
    <property type="project" value="InterPro"/>
</dbReference>
<dbReference type="GO" id="GO:0140662">
    <property type="term" value="F:ATP-dependent protein folding chaperone"/>
    <property type="evidence" value="ECO:0007669"/>
    <property type="project" value="InterPro"/>
</dbReference>
<dbReference type="GO" id="GO:0046983">
    <property type="term" value="F:protein dimerization activity"/>
    <property type="evidence" value="ECO:0007669"/>
    <property type="project" value="InterPro"/>
</dbReference>
<dbReference type="GO" id="GO:0051082">
    <property type="term" value="F:unfolded protein binding"/>
    <property type="evidence" value="ECO:0007669"/>
    <property type="project" value="UniProtKB-UniRule"/>
</dbReference>
<dbReference type="GO" id="GO:0008270">
    <property type="term" value="F:zinc ion binding"/>
    <property type="evidence" value="ECO:0007669"/>
    <property type="project" value="InterPro"/>
</dbReference>
<dbReference type="GO" id="GO:0051301">
    <property type="term" value="P:cell division"/>
    <property type="evidence" value="ECO:0007669"/>
    <property type="project" value="TreeGrafter"/>
</dbReference>
<dbReference type="GO" id="GO:0051603">
    <property type="term" value="P:proteolysis involved in protein catabolic process"/>
    <property type="evidence" value="ECO:0007669"/>
    <property type="project" value="TreeGrafter"/>
</dbReference>
<dbReference type="CDD" id="cd19497">
    <property type="entry name" value="RecA-like_ClpX"/>
    <property type="match status" value="1"/>
</dbReference>
<dbReference type="FunFam" id="1.10.8.60:FF:000002">
    <property type="entry name" value="ATP-dependent Clp protease ATP-binding subunit ClpX"/>
    <property type="match status" value="1"/>
</dbReference>
<dbReference type="FunFam" id="3.40.50.300:FF:000005">
    <property type="entry name" value="ATP-dependent Clp protease ATP-binding subunit ClpX"/>
    <property type="match status" value="1"/>
</dbReference>
<dbReference type="Gene3D" id="1.10.8.60">
    <property type="match status" value="1"/>
</dbReference>
<dbReference type="Gene3D" id="6.20.220.10">
    <property type="entry name" value="ClpX chaperone, C4-type zinc finger domain"/>
    <property type="match status" value="1"/>
</dbReference>
<dbReference type="Gene3D" id="3.40.50.300">
    <property type="entry name" value="P-loop containing nucleotide triphosphate hydrolases"/>
    <property type="match status" value="1"/>
</dbReference>
<dbReference type="HAMAP" id="MF_00175">
    <property type="entry name" value="ClpX"/>
    <property type="match status" value="1"/>
</dbReference>
<dbReference type="InterPro" id="IPR003593">
    <property type="entry name" value="AAA+_ATPase"/>
</dbReference>
<dbReference type="InterPro" id="IPR050052">
    <property type="entry name" value="ATP-dep_Clp_protease_ClpX"/>
</dbReference>
<dbReference type="InterPro" id="IPR003959">
    <property type="entry name" value="ATPase_AAA_core"/>
</dbReference>
<dbReference type="InterPro" id="IPR019489">
    <property type="entry name" value="Clp_ATPase_C"/>
</dbReference>
<dbReference type="InterPro" id="IPR004487">
    <property type="entry name" value="Clp_protease_ATP-bd_su_ClpX"/>
</dbReference>
<dbReference type="InterPro" id="IPR046425">
    <property type="entry name" value="ClpX_bact"/>
</dbReference>
<dbReference type="InterPro" id="IPR027417">
    <property type="entry name" value="P-loop_NTPase"/>
</dbReference>
<dbReference type="InterPro" id="IPR010603">
    <property type="entry name" value="Znf_CppX_C4"/>
</dbReference>
<dbReference type="InterPro" id="IPR038366">
    <property type="entry name" value="Znf_CppX_C4_sf"/>
</dbReference>
<dbReference type="NCBIfam" id="TIGR00382">
    <property type="entry name" value="clpX"/>
    <property type="match status" value="1"/>
</dbReference>
<dbReference type="NCBIfam" id="NF003745">
    <property type="entry name" value="PRK05342.1"/>
    <property type="match status" value="1"/>
</dbReference>
<dbReference type="PANTHER" id="PTHR48102:SF7">
    <property type="entry name" value="ATP-DEPENDENT CLP PROTEASE ATP-BINDING SUBUNIT CLPX-LIKE, MITOCHONDRIAL"/>
    <property type="match status" value="1"/>
</dbReference>
<dbReference type="PANTHER" id="PTHR48102">
    <property type="entry name" value="ATP-DEPENDENT CLP PROTEASE ATP-BINDING SUBUNIT CLPX-LIKE, MITOCHONDRIAL-RELATED"/>
    <property type="match status" value="1"/>
</dbReference>
<dbReference type="Pfam" id="PF07724">
    <property type="entry name" value="AAA_2"/>
    <property type="match status" value="1"/>
</dbReference>
<dbReference type="Pfam" id="PF10431">
    <property type="entry name" value="ClpB_D2-small"/>
    <property type="match status" value="1"/>
</dbReference>
<dbReference type="Pfam" id="PF06689">
    <property type="entry name" value="zf-C4_ClpX"/>
    <property type="match status" value="1"/>
</dbReference>
<dbReference type="SMART" id="SM00382">
    <property type="entry name" value="AAA"/>
    <property type="match status" value="1"/>
</dbReference>
<dbReference type="SMART" id="SM01086">
    <property type="entry name" value="ClpB_D2-small"/>
    <property type="match status" value="1"/>
</dbReference>
<dbReference type="SMART" id="SM00994">
    <property type="entry name" value="zf-C4_ClpX"/>
    <property type="match status" value="1"/>
</dbReference>
<dbReference type="SUPFAM" id="SSF57716">
    <property type="entry name" value="Glucocorticoid receptor-like (DNA-binding domain)"/>
    <property type="match status" value="1"/>
</dbReference>
<dbReference type="SUPFAM" id="SSF52540">
    <property type="entry name" value="P-loop containing nucleoside triphosphate hydrolases"/>
    <property type="match status" value="1"/>
</dbReference>
<dbReference type="PROSITE" id="PS51902">
    <property type="entry name" value="CLPX_ZB"/>
    <property type="match status" value="1"/>
</dbReference>
<name>CLPX_PHOPR</name>
<feature type="chain" id="PRO_0000160398" description="ATP-dependent Clp protease ATP-binding subunit ClpX">
    <location>
        <begin position="1"/>
        <end position="426"/>
    </location>
</feature>
<feature type="domain" description="ClpX-type ZB" evidence="2">
    <location>
        <begin position="4"/>
        <end position="57"/>
    </location>
</feature>
<feature type="binding site" evidence="2">
    <location>
        <position position="16"/>
    </location>
    <ligand>
        <name>Zn(2+)</name>
        <dbReference type="ChEBI" id="CHEBI:29105"/>
    </ligand>
</feature>
<feature type="binding site" evidence="2">
    <location>
        <position position="19"/>
    </location>
    <ligand>
        <name>Zn(2+)</name>
        <dbReference type="ChEBI" id="CHEBI:29105"/>
    </ligand>
</feature>
<feature type="binding site" evidence="2">
    <location>
        <position position="38"/>
    </location>
    <ligand>
        <name>Zn(2+)</name>
        <dbReference type="ChEBI" id="CHEBI:29105"/>
    </ligand>
</feature>
<feature type="binding site" evidence="2">
    <location>
        <position position="41"/>
    </location>
    <ligand>
        <name>Zn(2+)</name>
        <dbReference type="ChEBI" id="CHEBI:29105"/>
    </ligand>
</feature>
<feature type="binding site" evidence="1">
    <location>
        <begin position="122"/>
        <end position="129"/>
    </location>
    <ligand>
        <name>ATP</name>
        <dbReference type="ChEBI" id="CHEBI:30616"/>
    </ligand>
</feature>
<sequence length="426" mass="46654">MTDKRKDTGSGKLLYCSFCGKSQHEVRKLIAGPSVYICDECVDLCNDIIREEIKEVMPKRDGNDLPTPQEIRTNLDDYVIGQNHAKKVLAVAVYNHYKRLRNGDTTSDGVELGKSNILLIGPTGSGKTLLAETLARMLDVPFTMADATTLTEAGYVGEDVENIIQKLLQKCDYDVAKAERGIVYIDEIDKISRKSDNPSITRDVSGEGVQQALLKLIEGTVASVPPQGGRKHPQQEFLQVDTSKILFICGGAFAGLDKVVEQRVATGTGIGFSADVRSKSEERTISDLFKKVEPEDLVKYGLIPEFIGRLPVTATLTELDQEALVKILREPKNALTKQYAALLELENVELEFRDDALVAIAHKAMARKTGARGLRSIVEAVLLDTMYELPSAVGVSKVVIDESVINGESEPLLIYENTENQAAGAE</sequence>